<accession>Q816D1</accession>
<proteinExistence type="inferred from homology"/>
<dbReference type="EC" id="5.1.1.7" evidence="1"/>
<dbReference type="EMBL" id="AE016877">
    <property type="protein sequence ID" value="AAP11809.1"/>
    <property type="molecule type" value="Genomic_DNA"/>
</dbReference>
<dbReference type="RefSeq" id="NP_834608.1">
    <property type="nucleotide sequence ID" value="NC_004722.1"/>
</dbReference>
<dbReference type="RefSeq" id="WP_000077401.1">
    <property type="nucleotide sequence ID" value="NC_004722.1"/>
</dbReference>
<dbReference type="SMR" id="Q816D1"/>
<dbReference type="STRING" id="226900.BC_4936"/>
<dbReference type="KEGG" id="bce:BC4936"/>
<dbReference type="PATRIC" id="fig|226900.8.peg.5088"/>
<dbReference type="HOGENOM" id="CLU_053306_3_0_9"/>
<dbReference type="OrthoDB" id="9805408at2"/>
<dbReference type="UniPathway" id="UPA00034">
    <property type="reaction ID" value="UER00025"/>
</dbReference>
<dbReference type="Proteomes" id="UP000001417">
    <property type="component" value="Chromosome"/>
</dbReference>
<dbReference type="GO" id="GO:0005829">
    <property type="term" value="C:cytosol"/>
    <property type="evidence" value="ECO:0000318"/>
    <property type="project" value="GO_Central"/>
</dbReference>
<dbReference type="GO" id="GO:0008837">
    <property type="term" value="F:diaminopimelate epimerase activity"/>
    <property type="evidence" value="ECO:0000318"/>
    <property type="project" value="GO_Central"/>
</dbReference>
<dbReference type="GO" id="GO:0009089">
    <property type="term" value="P:lysine biosynthetic process via diaminopimelate"/>
    <property type="evidence" value="ECO:0000318"/>
    <property type="project" value="GO_Central"/>
</dbReference>
<dbReference type="FunFam" id="3.10.310.10:FF:000004">
    <property type="entry name" value="Diaminopimelate epimerase"/>
    <property type="match status" value="1"/>
</dbReference>
<dbReference type="FunFam" id="3.10.310.10:FF:000006">
    <property type="entry name" value="Diaminopimelate epimerase"/>
    <property type="match status" value="1"/>
</dbReference>
<dbReference type="Gene3D" id="3.10.310.10">
    <property type="entry name" value="Diaminopimelate Epimerase, Chain A, domain 1"/>
    <property type="match status" value="2"/>
</dbReference>
<dbReference type="HAMAP" id="MF_00197">
    <property type="entry name" value="DAP_epimerase"/>
    <property type="match status" value="1"/>
</dbReference>
<dbReference type="InterPro" id="IPR018510">
    <property type="entry name" value="DAP_epimerase_AS"/>
</dbReference>
<dbReference type="InterPro" id="IPR001653">
    <property type="entry name" value="DAP_epimerase_DapF"/>
</dbReference>
<dbReference type="NCBIfam" id="TIGR00652">
    <property type="entry name" value="DapF"/>
    <property type="match status" value="1"/>
</dbReference>
<dbReference type="PANTHER" id="PTHR31689:SF0">
    <property type="entry name" value="DIAMINOPIMELATE EPIMERASE"/>
    <property type="match status" value="1"/>
</dbReference>
<dbReference type="PANTHER" id="PTHR31689">
    <property type="entry name" value="DIAMINOPIMELATE EPIMERASE, CHLOROPLASTIC"/>
    <property type="match status" value="1"/>
</dbReference>
<dbReference type="Pfam" id="PF01678">
    <property type="entry name" value="DAP_epimerase"/>
    <property type="match status" value="2"/>
</dbReference>
<dbReference type="SUPFAM" id="SSF54506">
    <property type="entry name" value="Diaminopimelate epimerase-like"/>
    <property type="match status" value="1"/>
</dbReference>
<dbReference type="PROSITE" id="PS01326">
    <property type="entry name" value="DAP_EPIMERASE"/>
    <property type="match status" value="1"/>
</dbReference>
<organism>
    <name type="scientific">Bacillus cereus (strain ATCC 14579 / DSM 31 / CCUG 7414 / JCM 2152 / NBRC 15305 / NCIMB 9373 / NCTC 2599 / NRRL B-3711)</name>
    <dbReference type="NCBI Taxonomy" id="226900"/>
    <lineage>
        <taxon>Bacteria</taxon>
        <taxon>Bacillati</taxon>
        <taxon>Bacillota</taxon>
        <taxon>Bacilli</taxon>
        <taxon>Bacillales</taxon>
        <taxon>Bacillaceae</taxon>
        <taxon>Bacillus</taxon>
        <taxon>Bacillus cereus group</taxon>
    </lineage>
</organism>
<name>DAPF_BACCR</name>
<feature type="chain" id="PRO_1000011839" description="Diaminopimelate epimerase">
    <location>
        <begin position="1"/>
        <end position="288"/>
    </location>
</feature>
<feature type="active site" description="Proton donor" evidence="1">
    <location>
        <position position="76"/>
    </location>
</feature>
<feature type="active site" description="Proton acceptor" evidence="1">
    <location>
        <position position="226"/>
    </location>
</feature>
<feature type="binding site" evidence="1">
    <location>
        <position position="14"/>
    </location>
    <ligand>
        <name>substrate</name>
    </ligand>
</feature>
<feature type="binding site" evidence="1">
    <location>
        <position position="67"/>
    </location>
    <ligand>
        <name>substrate</name>
    </ligand>
</feature>
<feature type="binding site" evidence="1">
    <location>
        <begin position="77"/>
        <end position="78"/>
    </location>
    <ligand>
        <name>substrate</name>
    </ligand>
</feature>
<feature type="binding site" evidence="1">
    <location>
        <position position="166"/>
    </location>
    <ligand>
        <name>substrate</name>
    </ligand>
</feature>
<feature type="binding site" evidence="1">
    <location>
        <position position="199"/>
    </location>
    <ligand>
        <name>substrate</name>
    </ligand>
</feature>
<feature type="binding site" evidence="1">
    <location>
        <begin position="217"/>
        <end position="218"/>
    </location>
    <ligand>
        <name>substrate</name>
    </ligand>
</feature>
<feature type="binding site" evidence="1">
    <location>
        <begin position="227"/>
        <end position="228"/>
    </location>
    <ligand>
        <name>substrate</name>
    </ligand>
</feature>
<feature type="site" description="Could be important to modulate the pK values of the two catalytic cysteine residues" evidence="1">
    <location>
        <position position="168"/>
    </location>
</feature>
<feature type="site" description="Could be important to modulate the pK values of the two catalytic cysteine residues" evidence="1">
    <location>
        <position position="217"/>
    </location>
</feature>
<sequence>MSQFSFTKMHGLGNSYIYVNMFEEQIPEEDLALVAEKVSNINTGIGADGMILICPSDVAPVKMRMFNNDGSEGKSCGNGLRCVAKYAYEHKLVEETVFTIETLAGIVTAEVTVEDGVVTLAKIDMGAPRLTRAEIPMLGESETPFIRENFLYNNHRYAFTAVSMGNPHAVIFVDDVEKAPLTTLGPVLETHEMFPERVNVEFIEILNEDEMNFRVWERGSGVTQACGTGACAAVVAAILNGKMERGKEITVHLAGGDLMIAWTEEGNVLMKGPAEVICRGVYEYKIEA</sequence>
<comment type="function">
    <text evidence="1">Catalyzes the stereoinversion of LL-2,6-diaminopimelate (L,L-DAP) to meso-diaminopimelate (meso-DAP), a precursor of L-lysine and an essential component of the bacterial peptidoglycan.</text>
</comment>
<comment type="catalytic activity">
    <reaction evidence="1">
        <text>(2S,6S)-2,6-diaminopimelate = meso-2,6-diaminopimelate</text>
        <dbReference type="Rhea" id="RHEA:15393"/>
        <dbReference type="ChEBI" id="CHEBI:57609"/>
        <dbReference type="ChEBI" id="CHEBI:57791"/>
        <dbReference type="EC" id="5.1.1.7"/>
    </reaction>
</comment>
<comment type="pathway">
    <text evidence="1">Amino-acid biosynthesis; L-lysine biosynthesis via DAP pathway; DL-2,6-diaminopimelate from LL-2,6-diaminopimelate: step 1/1.</text>
</comment>
<comment type="subunit">
    <text evidence="1">Homodimer.</text>
</comment>
<comment type="subcellular location">
    <subcellularLocation>
        <location evidence="1">Cytoplasm</location>
    </subcellularLocation>
</comment>
<comment type="similarity">
    <text evidence="1">Belongs to the diaminopimelate epimerase family.</text>
</comment>
<keyword id="KW-0028">Amino-acid biosynthesis</keyword>
<keyword id="KW-0963">Cytoplasm</keyword>
<keyword id="KW-0413">Isomerase</keyword>
<keyword id="KW-0457">Lysine biosynthesis</keyword>
<keyword id="KW-1185">Reference proteome</keyword>
<protein>
    <recommendedName>
        <fullName evidence="1">Diaminopimelate epimerase</fullName>
        <shortName evidence="1">DAP epimerase</shortName>
        <ecNumber evidence="1">5.1.1.7</ecNumber>
    </recommendedName>
    <alternativeName>
        <fullName evidence="1">PLP-independent amino acid racemase</fullName>
    </alternativeName>
</protein>
<evidence type="ECO:0000255" key="1">
    <source>
        <dbReference type="HAMAP-Rule" id="MF_00197"/>
    </source>
</evidence>
<gene>
    <name evidence="1" type="primary">dapF</name>
    <name type="ordered locus">BC_4936</name>
</gene>
<reference key="1">
    <citation type="journal article" date="2003" name="Nature">
        <title>Genome sequence of Bacillus cereus and comparative analysis with Bacillus anthracis.</title>
        <authorList>
            <person name="Ivanova N."/>
            <person name="Sorokin A."/>
            <person name="Anderson I."/>
            <person name="Galleron N."/>
            <person name="Candelon B."/>
            <person name="Kapatral V."/>
            <person name="Bhattacharyya A."/>
            <person name="Reznik G."/>
            <person name="Mikhailova N."/>
            <person name="Lapidus A."/>
            <person name="Chu L."/>
            <person name="Mazur M."/>
            <person name="Goltsman E."/>
            <person name="Larsen N."/>
            <person name="D'Souza M."/>
            <person name="Walunas T."/>
            <person name="Grechkin Y."/>
            <person name="Pusch G."/>
            <person name="Haselkorn R."/>
            <person name="Fonstein M."/>
            <person name="Ehrlich S.D."/>
            <person name="Overbeek R."/>
            <person name="Kyrpides N.C."/>
        </authorList>
    </citation>
    <scope>NUCLEOTIDE SEQUENCE [LARGE SCALE GENOMIC DNA]</scope>
    <source>
        <strain>ATCC 14579 / DSM 31 / CCUG 7414 / JCM 2152 / NBRC 15305 / NCIMB 9373 / NCTC 2599 / NRRL B-3711</strain>
    </source>
</reference>